<name>SYDND_METI4</name>
<feature type="chain" id="PRO_1000091012" description="Aspartate--tRNA(Asp/Asn) ligase">
    <location>
        <begin position="1"/>
        <end position="600"/>
    </location>
</feature>
<feature type="region of interest" description="Aspartate" evidence="1">
    <location>
        <begin position="205"/>
        <end position="208"/>
    </location>
</feature>
<feature type="binding site" evidence="1">
    <location>
        <position position="181"/>
    </location>
    <ligand>
        <name>L-aspartate</name>
        <dbReference type="ChEBI" id="CHEBI:29991"/>
    </ligand>
</feature>
<feature type="binding site" evidence="1">
    <location>
        <begin position="227"/>
        <end position="229"/>
    </location>
    <ligand>
        <name>ATP</name>
        <dbReference type="ChEBI" id="CHEBI:30616"/>
    </ligand>
</feature>
<feature type="binding site" evidence="1">
    <location>
        <position position="227"/>
    </location>
    <ligand>
        <name>L-aspartate</name>
        <dbReference type="ChEBI" id="CHEBI:29991"/>
    </ligand>
</feature>
<feature type="binding site" evidence="1">
    <location>
        <position position="236"/>
    </location>
    <ligand>
        <name>ATP</name>
        <dbReference type="ChEBI" id="CHEBI:30616"/>
    </ligand>
</feature>
<feature type="binding site" evidence="1">
    <location>
        <position position="455"/>
    </location>
    <ligand>
        <name>L-aspartate</name>
        <dbReference type="ChEBI" id="CHEBI:29991"/>
    </ligand>
</feature>
<feature type="binding site" evidence="1">
    <location>
        <position position="490"/>
    </location>
    <ligand>
        <name>ATP</name>
        <dbReference type="ChEBI" id="CHEBI:30616"/>
    </ligand>
</feature>
<feature type="binding site" evidence="1">
    <location>
        <position position="497"/>
    </location>
    <ligand>
        <name>L-aspartate</name>
        <dbReference type="ChEBI" id="CHEBI:29991"/>
    </ligand>
</feature>
<feature type="binding site" evidence="1">
    <location>
        <begin position="542"/>
        <end position="545"/>
    </location>
    <ligand>
        <name>ATP</name>
        <dbReference type="ChEBI" id="CHEBI:30616"/>
    </ligand>
</feature>
<feature type="site" description="Important for tRNA non-discrimination" evidence="1">
    <location>
        <position position="38"/>
    </location>
</feature>
<feature type="site" description="Important for tRNA non-discrimination" evidence="1">
    <location>
        <position position="90"/>
    </location>
</feature>
<keyword id="KW-0030">Aminoacyl-tRNA synthetase</keyword>
<keyword id="KW-0067">ATP-binding</keyword>
<keyword id="KW-0963">Cytoplasm</keyword>
<keyword id="KW-0436">Ligase</keyword>
<keyword id="KW-0547">Nucleotide-binding</keyword>
<keyword id="KW-0648">Protein biosynthesis</keyword>
<dbReference type="EC" id="6.1.1.23" evidence="1"/>
<dbReference type="EMBL" id="CP000975">
    <property type="protein sequence ID" value="ACD82141.1"/>
    <property type="molecule type" value="Genomic_DNA"/>
</dbReference>
<dbReference type="RefSeq" id="WP_012462423.1">
    <property type="nucleotide sequence ID" value="NC_010794.1"/>
</dbReference>
<dbReference type="SMR" id="B3DX01"/>
<dbReference type="STRING" id="481448.Minf_0081"/>
<dbReference type="KEGG" id="min:Minf_0081"/>
<dbReference type="eggNOG" id="COG0173">
    <property type="taxonomic scope" value="Bacteria"/>
</dbReference>
<dbReference type="HOGENOM" id="CLU_014330_3_2_0"/>
<dbReference type="OrthoDB" id="9802326at2"/>
<dbReference type="Proteomes" id="UP000009149">
    <property type="component" value="Chromosome"/>
</dbReference>
<dbReference type="GO" id="GO:0005737">
    <property type="term" value="C:cytoplasm"/>
    <property type="evidence" value="ECO:0007669"/>
    <property type="project" value="UniProtKB-SubCell"/>
</dbReference>
<dbReference type="GO" id="GO:0004815">
    <property type="term" value="F:aspartate-tRNA ligase activity"/>
    <property type="evidence" value="ECO:0007669"/>
    <property type="project" value="UniProtKB-UniRule"/>
</dbReference>
<dbReference type="GO" id="GO:0050560">
    <property type="term" value="F:aspartate-tRNA(Asn) ligase activity"/>
    <property type="evidence" value="ECO:0007669"/>
    <property type="project" value="UniProtKB-EC"/>
</dbReference>
<dbReference type="GO" id="GO:0005524">
    <property type="term" value="F:ATP binding"/>
    <property type="evidence" value="ECO:0007669"/>
    <property type="project" value="UniProtKB-UniRule"/>
</dbReference>
<dbReference type="GO" id="GO:0003676">
    <property type="term" value="F:nucleic acid binding"/>
    <property type="evidence" value="ECO:0007669"/>
    <property type="project" value="InterPro"/>
</dbReference>
<dbReference type="GO" id="GO:0006422">
    <property type="term" value="P:aspartyl-tRNA aminoacylation"/>
    <property type="evidence" value="ECO:0007669"/>
    <property type="project" value="UniProtKB-UniRule"/>
</dbReference>
<dbReference type="CDD" id="cd00777">
    <property type="entry name" value="AspRS_core"/>
    <property type="match status" value="1"/>
</dbReference>
<dbReference type="CDD" id="cd04317">
    <property type="entry name" value="EcAspRS_like_N"/>
    <property type="match status" value="1"/>
</dbReference>
<dbReference type="Gene3D" id="3.30.930.10">
    <property type="entry name" value="Bira Bifunctional Protein, Domain 2"/>
    <property type="match status" value="1"/>
</dbReference>
<dbReference type="Gene3D" id="3.30.1360.30">
    <property type="entry name" value="GAD-like domain"/>
    <property type="match status" value="1"/>
</dbReference>
<dbReference type="Gene3D" id="2.40.50.140">
    <property type="entry name" value="Nucleic acid-binding proteins"/>
    <property type="match status" value="1"/>
</dbReference>
<dbReference type="HAMAP" id="MF_00044">
    <property type="entry name" value="Asp_tRNA_synth_type1"/>
    <property type="match status" value="1"/>
</dbReference>
<dbReference type="InterPro" id="IPR004364">
    <property type="entry name" value="Aa-tRNA-synt_II"/>
</dbReference>
<dbReference type="InterPro" id="IPR006195">
    <property type="entry name" value="aa-tRNA-synth_II"/>
</dbReference>
<dbReference type="InterPro" id="IPR045864">
    <property type="entry name" value="aa-tRNA-synth_II/BPL/LPL"/>
</dbReference>
<dbReference type="InterPro" id="IPR004524">
    <property type="entry name" value="Asp-tRNA-ligase_1"/>
</dbReference>
<dbReference type="InterPro" id="IPR047089">
    <property type="entry name" value="Asp-tRNA-ligase_1_N"/>
</dbReference>
<dbReference type="InterPro" id="IPR002312">
    <property type="entry name" value="Asp/Asn-tRNA-synth_IIb"/>
</dbReference>
<dbReference type="InterPro" id="IPR047090">
    <property type="entry name" value="AspRS_core"/>
</dbReference>
<dbReference type="InterPro" id="IPR004115">
    <property type="entry name" value="GAD-like_sf"/>
</dbReference>
<dbReference type="InterPro" id="IPR029351">
    <property type="entry name" value="GAD_dom"/>
</dbReference>
<dbReference type="InterPro" id="IPR012340">
    <property type="entry name" value="NA-bd_OB-fold"/>
</dbReference>
<dbReference type="InterPro" id="IPR004365">
    <property type="entry name" value="NA-bd_OB_tRNA"/>
</dbReference>
<dbReference type="NCBIfam" id="TIGR00459">
    <property type="entry name" value="aspS_bact"/>
    <property type="match status" value="1"/>
</dbReference>
<dbReference type="NCBIfam" id="NF001750">
    <property type="entry name" value="PRK00476.1"/>
    <property type="match status" value="1"/>
</dbReference>
<dbReference type="PANTHER" id="PTHR22594:SF5">
    <property type="entry name" value="ASPARTATE--TRNA LIGASE, MITOCHONDRIAL"/>
    <property type="match status" value="1"/>
</dbReference>
<dbReference type="PANTHER" id="PTHR22594">
    <property type="entry name" value="ASPARTYL/LYSYL-TRNA SYNTHETASE"/>
    <property type="match status" value="1"/>
</dbReference>
<dbReference type="Pfam" id="PF02938">
    <property type="entry name" value="GAD"/>
    <property type="match status" value="1"/>
</dbReference>
<dbReference type="Pfam" id="PF00152">
    <property type="entry name" value="tRNA-synt_2"/>
    <property type="match status" value="1"/>
</dbReference>
<dbReference type="Pfam" id="PF01336">
    <property type="entry name" value="tRNA_anti-codon"/>
    <property type="match status" value="1"/>
</dbReference>
<dbReference type="PRINTS" id="PR01042">
    <property type="entry name" value="TRNASYNTHASP"/>
</dbReference>
<dbReference type="SUPFAM" id="SSF55681">
    <property type="entry name" value="Class II aaRS and biotin synthetases"/>
    <property type="match status" value="1"/>
</dbReference>
<dbReference type="SUPFAM" id="SSF55261">
    <property type="entry name" value="GAD domain-like"/>
    <property type="match status" value="1"/>
</dbReference>
<dbReference type="SUPFAM" id="SSF50249">
    <property type="entry name" value="Nucleic acid-binding proteins"/>
    <property type="match status" value="1"/>
</dbReference>
<dbReference type="PROSITE" id="PS50862">
    <property type="entry name" value="AA_TRNA_LIGASE_II"/>
    <property type="match status" value="1"/>
</dbReference>
<organism>
    <name type="scientific">Methylacidiphilum infernorum (isolate V4)</name>
    <name type="common">Methylokorus infernorum (strain V4)</name>
    <dbReference type="NCBI Taxonomy" id="481448"/>
    <lineage>
        <taxon>Bacteria</taxon>
        <taxon>Pseudomonadati</taxon>
        <taxon>Verrucomicrobiota</taxon>
        <taxon>Methylacidiphilae</taxon>
        <taxon>Methylacidiphilales</taxon>
        <taxon>Methylacidiphilaceae</taxon>
        <taxon>Methylacidiphilum (ex Ratnadevi et al. 2023)</taxon>
    </lineage>
</organism>
<accession>B3DX01</accession>
<reference key="1">
    <citation type="journal article" date="2008" name="Biol. Direct">
        <title>Complete genome sequence of the extremely acidophilic methanotroph isolate V4, Methylacidiphilum infernorum, a representative of the bacterial phylum Verrucomicrobia.</title>
        <authorList>
            <person name="Hou S."/>
            <person name="Makarova K.S."/>
            <person name="Saw J.H."/>
            <person name="Senin P."/>
            <person name="Ly B.V."/>
            <person name="Zhou Z."/>
            <person name="Ren Y."/>
            <person name="Wang J."/>
            <person name="Galperin M.Y."/>
            <person name="Omelchenko M.V."/>
            <person name="Wolf Y.I."/>
            <person name="Yutin N."/>
            <person name="Koonin E.V."/>
            <person name="Stott M.B."/>
            <person name="Mountain B.W."/>
            <person name="Crowe M.A."/>
            <person name="Smirnova A.V."/>
            <person name="Dunfield P.F."/>
            <person name="Feng L."/>
            <person name="Wang L."/>
            <person name="Alam M."/>
        </authorList>
    </citation>
    <scope>NUCLEOTIDE SEQUENCE [LARGE SCALE GENOMIC DNA]</scope>
    <source>
        <strain>Isolate V4</strain>
    </source>
</reference>
<proteinExistence type="inferred from homology"/>
<gene>
    <name evidence="1" type="primary">aspS</name>
    <name type="ordered locus">Minf_0081</name>
</gene>
<evidence type="ECO:0000255" key="1">
    <source>
        <dbReference type="HAMAP-Rule" id="MF_00044"/>
    </source>
</evidence>
<comment type="function">
    <text evidence="1">Aspartyl-tRNA synthetase with relaxed tRNA specificity since it is able to aspartylate not only its cognate tRNA(Asp) but also tRNA(Asn). Reaction proceeds in two steps: L-aspartate is first activated by ATP to form Asp-AMP and then transferred to the acceptor end of tRNA(Asp/Asn).</text>
</comment>
<comment type="catalytic activity">
    <reaction evidence="1">
        <text>tRNA(Asx) + L-aspartate + ATP = L-aspartyl-tRNA(Asx) + AMP + diphosphate</text>
        <dbReference type="Rhea" id="RHEA:18349"/>
        <dbReference type="Rhea" id="RHEA-COMP:9710"/>
        <dbReference type="Rhea" id="RHEA-COMP:9711"/>
        <dbReference type="ChEBI" id="CHEBI:29991"/>
        <dbReference type="ChEBI" id="CHEBI:30616"/>
        <dbReference type="ChEBI" id="CHEBI:33019"/>
        <dbReference type="ChEBI" id="CHEBI:78442"/>
        <dbReference type="ChEBI" id="CHEBI:78516"/>
        <dbReference type="ChEBI" id="CHEBI:456215"/>
        <dbReference type="EC" id="6.1.1.23"/>
    </reaction>
</comment>
<comment type="subunit">
    <text evidence="1">Homodimer.</text>
</comment>
<comment type="subcellular location">
    <subcellularLocation>
        <location evidence="1">Cytoplasm</location>
    </subcellularLocation>
</comment>
<comment type="similarity">
    <text evidence="1">Belongs to the class-II aminoacyl-tRNA synthetase family. Type 1 subfamily.</text>
</comment>
<sequence>MKKSEMKGYRTHHCNELNLALVGHKAKLCGWVHSKRDHGGLLFIDLRDREGITQVVFHPEKDPPLFAKAKQLKNEFVVKVEGKVVERPAGTKNASIPTGEIELEAESLEILNPSQPLPFNLDEDIENEELRLSFRFLDLRRKKILNCLKVRHLVSSVVREYLSREGFLEVETPILSKSTPEGARDFLVPSRLSPGKFYALPQAPQQYKQLLMVAGIDKYFQIARCFRDEDLRSDRQPEFTQIDLEASFVEVEDIMKWVEEMIQLIFLKVLGIELSLPFVRLTYSEALDNYGSDKPDLRIEWQIQDVGTVFKNTQFKLFRDVIEKGGVIKALNAKGRAPMVNSSALEELVGIATSMGAKGLAHIRVENQEWKSPIVKFFSSEERKELERLLRMEPSDLVLFSAGPREQACLILGKIRLHLAEMTQGIPGNQWKFAWITDFPLFEYSPLEQKWNSVHHPFTRPHPEDLTKLNEGKYDAIRALAYDIVLNGVELGGGSLRIYEKELQEKVFSILGIGKERQELLFGHLLKAFQYGAPPHGGIALGLDRFVMLLTGSESLREVIAFPKNRHGVDLLTQSPSEVDYQQLKELNIQLSFPSIKIEP</sequence>
<protein>
    <recommendedName>
        <fullName evidence="1">Aspartate--tRNA(Asp/Asn) ligase</fullName>
        <ecNumber evidence="1">6.1.1.23</ecNumber>
    </recommendedName>
    <alternativeName>
        <fullName evidence="1">Aspartyl-tRNA synthetase</fullName>
        <shortName evidence="1">AspRS</shortName>
    </alternativeName>
    <alternativeName>
        <fullName evidence="1">Non-discriminating aspartyl-tRNA synthetase</fullName>
        <shortName evidence="1">ND-AspRS</shortName>
    </alternativeName>
</protein>